<name>PURP_SULAC</name>
<accession>Q4JAU3</accession>
<gene>
    <name evidence="2" type="primary">purP</name>
    <name type="ordered locus">Saci_0707</name>
</gene>
<dbReference type="EC" id="6.3.4.23" evidence="2"/>
<dbReference type="EMBL" id="CP000077">
    <property type="protein sequence ID" value="AAY80086.1"/>
    <property type="molecule type" value="Genomic_DNA"/>
</dbReference>
<dbReference type="RefSeq" id="WP_011277588.1">
    <property type="nucleotide sequence ID" value="NC_007181.1"/>
</dbReference>
<dbReference type="SMR" id="Q4JAU3"/>
<dbReference type="STRING" id="330779.Saci_0707"/>
<dbReference type="GeneID" id="14551221"/>
<dbReference type="KEGG" id="sai:Saci_0707"/>
<dbReference type="PATRIC" id="fig|330779.12.peg.674"/>
<dbReference type="eggNOG" id="arCOG04346">
    <property type="taxonomic scope" value="Archaea"/>
</dbReference>
<dbReference type="HOGENOM" id="CLU_065084_0_0_2"/>
<dbReference type="UniPathway" id="UPA00074">
    <property type="reaction ID" value="UER00134"/>
</dbReference>
<dbReference type="Proteomes" id="UP000001018">
    <property type="component" value="Chromosome"/>
</dbReference>
<dbReference type="GO" id="GO:0005524">
    <property type="term" value="F:ATP binding"/>
    <property type="evidence" value="ECO:0007669"/>
    <property type="project" value="UniProtKB-KW"/>
</dbReference>
<dbReference type="GO" id="GO:0016879">
    <property type="term" value="F:ligase activity, forming carbon-nitrogen bonds"/>
    <property type="evidence" value="ECO:0007669"/>
    <property type="project" value="UniProtKB-UniRule"/>
</dbReference>
<dbReference type="GO" id="GO:0000287">
    <property type="term" value="F:magnesium ion binding"/>
    <property type="evidence" value="ECO:0007669"/>
    <property type="project" value="InterPro"/>
</dbReference>
<dbReference type="GO" id="GO:0006189">
    <property type="term" value="P:'de novo' IMP biosynthetic process"/>
    <property type="evidence" value="ECO:0007669"/>
    <property type="project" value="UniProtKB-UniRule"/>
</dbReference>
<dbReference type="Gene3D" id="3.40.50.20">
    <property type="match status" value="1"/>
</dbReference>
<dbReference type="Gene3D" id="3.30.1490.20">
    <property type="entry name" value="ATP-grasp fold, A domain"/>
    <property type="match status" value="1"/>
</dbReference>
<dbReference type="Gene3D" id="3.30.470.20">
    <property type="entry name" value="ATP-grasp fold, B domain"/>
    <property type="match status" value="1"/>
</dbReference>
<dbReference type="HAMAP" id="MF_01163">
    <property type="entry name" value="IMP_biosynth_PurP"/>
    <property type="match status" value="1"/>
</dbReference>
<dbReference type="InterPro" id="IPR011761">
    <property type="entry name" value="ATP-grasp"/>
</dbReference>
<dbReference type="InterPro" id="IPR013815">
    <property type="entry name" value="ATP_grasp_subdomain_1"/>
</dbReference>
<dbReference type="InterPro" id="IPR023656">
    <property type="entry name" value="IMP_biosynth_PurP"/>
</dbReference>
<dbReference type="InterPro" id="IPR009720">
    <property type="entry name" value="IMP_biosynth_PurP_C"/>
</dbReference>
<dbReference type="InterPro" id="IPR010672">
    <property type="entry name" value="IMP_biosynth_PurP_N"/>
</dbReference>
<dbReference type="InterPro" id="IPR016185">
    <property type="entry name" value="PreATP-grasp_dom_sf"/>
</dbReference>
<dbReference type="NCBIfam" id="NF009778">
    <property type="entry name" value="PRK13278.1-1"/>
    <property type="match status" value="1"/>
</dbReference>
<dbReference type="PANTHER" id="PTHR38147:SF2">
    <property type="entry name" value="5-FORMAMINOIMIDAZOLE-4-CARBOXAMIDE-1-(BETA)-D-RIBOFURANOSYL 5'-MONOPHOSPHATE SYNTHETASE"/>
    <property type="match status" value="1"/>
</dbReference>
<dbReference type="PANTHER" id="PTHR38147">
    <property type="entry name" value="5-FORMAMINOIMIDAZOLE-4-CARBOXAMIDE-1-(BETA)-D-RIBOFURANOSYL 5'-MONOPHOSPHATE SYNTHETASE-RELATED"/>
    <property type="match status" value="1"/>
</dbReference>
<dbReference type="Pfam" id="PF06849">
    <property type="entry name" value="DUF1246"/>
    <property type="match status" value="1"/>
</dbReference>
<dbReference type="Pfam" id="PF06973">
    <property type="entry name" value="DUF1297"/>
    <property type="match status" value="1"/>
</dbReference>
<dbReference type="PIRSF" id="PIRSF004602">
    <property type="entry name" value="ATPgrasp_PurP"/>
    <property type="match status" value="1"/>
</dbReference>
<dbReference type="SUPFAM" id="SSF56059">
    <property type="entry name" value="Glutathione synthetase ATP-binding domain-like"/>
    <property type="match status" value="1"/>
</dbReference>
<dbReference type="SUPFAM" id="SSF52440">
    <property type="entry name" value="PreATP-grasp domain"/>
    <property type="match status" value="1"/>
</dbReference>
<dbReference type="PROSITE" id="PS50975">
    <property type="entry name" value="ATP_GRASP"/>
    <property type="match status" value="1"/>
</dbReference>
<keyword id="KW-0067">ATP-binding</keyword>
<keyword id="KW-0436">Ligase</keyword>
<keyword id="KW-0460">Magnesium</keyword>
<keyword id="KW-0464">Manganese</keyword>
<keyword id="KW-0479">Metal-binding</keyword>
<keyword id="KW-0547">Nucleotide-binding</keyword>
<keyword id="KW-0658">Purine biosynthesis</keyword>
<keyword id="KW-1185">Reference proteome</keyword>
<feature type="chain" id="PRO_0000348639" description="5-formaminoimidazole-4-carboxamide-1-(beta)-D-ribofuranosyl 5'-monophosphate synthetase">
    <location>
        <begin position="1"/>
        <end position="333"/>
    </location>
</feature>
<feature type="domain" description="ATP-grasp" evidence="2">
    <location>
        <begin position="95"/>
        <end position="324"/>
    </location>
</feature>
<feature type="binding site" evidence="2">
    <location>
        <position position="10"/>
    </location>
    <ligand>
        <name>5-amino-1-(5-phospho-beta-D-ribosyl)imidazole-4-carboxamide</name>
        <dbReference type="ChEBI" id="CHEBI:58475"/>
    </ligand>
</feature>
<feature type="binding site" evidence="2">
    <location>
        <position position="74"/>
    </location>
    <ligand>
        <name>5-amino-1-(5-phospho-beta-D-ribosyl)imidazole-4-carboxamide</name>
        <dbReference type="ChEBI" id="CHEBI:58475"/>
    </ligand>
</feature>
<feature type="binding site" evidence="2">
    <location>
        <begin position="125"/>
        <end position="185"/>
    </location>
    <ligand>
        <name>ATP</name>
        <dbReference type="ChEBI" id="CHEBI:30616"/>
    </ligand>
</feature>
<feature type="binding site" evidence="2">
    <location>
        <position position="207"/>
    </location>
    <ligand>
        <name>ATP</name>
        <dbReference type="ChEBI" id="CHEBI:30616"/>
    </ligand>
</feature>
<feature type="binding site" evidence="2">
    <location>
        <position position="230"/>
    </location>
    <ligand>
        <name>5-amino-1-(5-phospho-beta-D-ribosyl)imidazole-4-carboxamide</name>
        <dbReference type="ChEBI" id="CHEBI:58475"/>
    </ligand>
</feature>
<feature type="binding site" evidence="2">
    <location>
        <position position="269"/>
    </location>
    <ligand>
        <name>Mg(2+)</name>
        <dbReference type="ChEBI" id="CHEBI:18420"/>
    </ligand>
</feature>
<feature type="binding site" evidence="2">
    <location>
        <position position="282"/>
    </location>
    <ligand>
        <name>Mg(2+)</name>
        <dbReference type="ChEBI" id="CHEBI:18420"/>
    </ligand>
</feature>
<comment type="function">
    <text evidence="2">Catalyzes the ATP- and formate-dependent formylation of 5-aminoimidazole-4-carboxamide-1-beta-d-ribofuranosyl 5'-monophosphate (AICAR) to 5-formaminoimidazole-4-carboxamide-1-beta-d-ribofuranosyl 5'-monophosphate (FAICAR) in the absence of folates.</text>
</comment>
<comment type="catalytic activity">
    <reaction evidence="2">
        <text>5-amino-1-(5-phospho-beta-D-ribosyl)imidazole-4-carboxamide + formate + ATP = 5-formamido-1-(5-phospho-D-ribosyl)imidazole-4-carboxamide + ADP + phosphate</text>
        <dbReference type="Rhea" id="RHEA:24836"/>
        <dbReference type="ChEBI" id="CHEBI:15740"/>
        <dbReference type="ChEBI" id="CHEBI:30616"/>
        <dbReference type="ChEBI" id="CHEBI:43474"/>
        <dbReference type="ChEBI" id="CHEBI:58467"/>
        <dbReference type="ChEBI" id="CHEBI:58475"/>
        <dbReference type="ChEBI" id="CHEBI:456216"/>
        <dbReference type="EC" id="6.3.4.23"/>
    </reaction>
</comment>
<comment type="cofactor">
    <cofactor evidence="1">
        <name>Mg(2+)</name>
        <dbReference type="ChEBI" id="CHEBI:18420"/>
    </cofactor>
    <cofactor evidence="1">
        <name>Mn(2+)</name>
        <dbReference type="ChEBI" id="CHEBI:29035"/>
    </cofactor>
    <text evidence="1">Binds 1 Mg(2+) or Mn(2+) ion per subunit.</text>
</comment>
<comment type="pathway">
    <text evidence="2">Purine metabolism; IMP biosynthesis via de novo pathway; 5-formamido-1-(5-phospho-D-ribosyl)imidazole-4-carboxamide from 5-amino-1-(5-phospho-D-ribosyl)imidazole-4-carboxamide (formate route): step 1/1.</text>
</comment>
<comment type="similarity">
    <text evidence="2">Belongs to the phosphohexose mutase family.</text>
</comment>
<evidence type="ECO:0000250" key="1"/>
<evidence type="ECO:0000255" key="2">
    <source>
        <dbReference type="HAMAP-Rule" id="MF_01163"/>
    </source>
</evidence>
<proteinExistence type="inferred from homology"/>
<organism>
    <name type="scientific">Sulfolobus acidocaldarius (strain ATCC 33909 / DSM 639 / JCM 8929 / NBRC 15157 / NCIMB 11770)</name>
    <dbReference type="NCBI Taxonomy" id="330779"/>
    <lineage>
        <taxon>Archaea</taxon>
        <taxon>Thermoproteota</taxon>
        <taxon>Thermoprotei</taxon>
        <taxon>Sulfolobales</taxon>
        <taxon>Sulfolobaceae</taxon>
        <taxon>Sulfolobus</taxon>
    </lineage>
</organism>
<protein>
    <recommendedName>
        <fullName evidence="2">5-formaminoimidazole-4-carboxamide-1-(beta)-D-ribofuranosyl 5'-monophosphate synthetase</fullName>
        <ecNumber evidence="2">6.3.4.23</ecNumber>
    </recommendedName>
    <alternativeName>
        <fullName evidence="2">5-aminoimidazole-4-carboxamide-1-beta-D-ribofuranosyl 5'-monophosphate--formate ligase</fullName>
    </alternativeName>
</protein>
<sequence>MDTVLTIGSHSSLQILHGAKKEGFKTVQITPKNRVNFYSQFSFIDEILGYNNEDEAVEFVNKYSNRGALIPHGSLVEYVGSERVSKITTKIFGNRNLFAWESNQKKKMSLLRRSGIQVPEEFENVEDVDRLVIVKLPGAKGGKGYFIAKTKSEVKEGLNRLISSKLIKDVNDVIIQEYVIGVPMYFQFFYSPILNRLEITGIDIRYETNVDGLRRLPENLADPTFVVVGNIPAVARESLLPKVYDYGMSFVNTVKEVVPPGMIGPFCLESVVKDDGSIVVFEFSGRIVAGTNLYIAGSPYSWLYWDEPMSVGRRISREIRLALNSNKLEVIFT</sequence>
<reference key="1">
    <citation type="journal article" date="2005" name="J. Bacteriol.">
        <title>The genome of Sulfolobus acidocaldarius, a model organism of the Crenarchaeota.</title>
        <authorList>
            <person name="Chen L."/>
            <person name="Bruegger K."/>
            <person name="Skovgaard M."/>
            <person name="Redder P."/>
            <person name="She Q."/>
            <person name="Torarinsson E."/>
            <person name="Greve B."/>
            <person name="Awayez M."/>
            <person name="Zibat A."/>
            <person name="Klenk H.-P."/>
            <person name="Garrett R.A."/>
        </authorList>
    </citation>
    <scope>NUCLEOTIDE SEQUENCE [LARGE SCALE GENOMIC DNA]</scope>
    <source>
        <strain>ATCC 33909 / DSM 639 / JCM 8929 / NBRC 15157 / NCIMB 11770</strain>
    </source>
</reference>